<sequence length="322" mass="36248">MKIIFLGTGAAIPTKHRNHSSVGIKYDGEVFLFDCGEGTQRQMIYTDISPMKINNIFISHLHGDHILGLAGLLQSIGFNGRTEPINIYGPPEIKNTIENILKIGYHSINFKITVHEINSKKPMKIIDSEKYMAYAYPVNHSIPCYAYILKEKKKPQLNLKKAMELGVEVGPDLKSLKDGNEVKLKNGKIIYPNDVLLPPKDSMCVAYSGDTMPIEDFGEFLNSIGCTVLIHEATFGSSKKNNAVETMHSTIEDAVNIGKIACVDTVILTHISARYDDNIEIYYNEIENIIKNNNEYNDNNFKIIVAEDLMEYDLKNKETIKK</sequence>
<proteinExistence type="inferred from homology"/>
<comment type="function">
    <text evidence="1">Zinc phosphodiesterase, which displays some tRNA 3'-processing endonuclease activity. Probably involved in tRNA maturation, by removing a 3'-trailer from precursor tRNA.</text>
</comment>
<comment type="catalytic activity">
    <reaction evidence="1">
        <text>Endonucleolytic cleavage of RNA, removing extra 3' nucleotides from tRNA precursor, generating 3' termini of tRNAs. A 3'-hydroxy group is left at the tRNA terminus and a 5'-phosphoryl group is left at the trailer molecule.</text>
        <dbReference type="EC" id="3.1.26.11"/>
    </reaction>
</comment>
<comment type="cofactor">
    <cofactor evidence="1">
        <name>Zn(2+)</name>
        <dbReference type="ChEBI" id="CHEBI:29105"/>
    </cofactor>
    <text evidence="1">Binds 2 Zn(2+) ions.</text>
</comment>
<comment type="subunit">
    <text evidence="1">Homodimer.</text>
</comment>
<comment type="similarity">
    <text evidence="1">Belongs to the RNase Z family.</text>
</comment>
<dbReference type="EC" id="3.1.26.11" evidence="1"/>
<dbReference type="EMBL" id="CP000743">
    <property type="protein sequence ID" value="ABR56310.1"/>
    <property type="molecule type" value="Genomic_DNA"/>
</dbReference>
<dbReference type="RefSeq" id="WP_011973442.1">
    <property type="nucleotide sequence ID" value="NC_009635.1"/>
</dbReference>
<dbReference type="SMR" id="A6UUY8"/>
<dbReference type="STRING" id="419665.Maeo_0727"/>
<dbReference type="GeneID" id="5327423"/>
<dbReference type="GeneID" id="75305803"/>
<dbReference type="KEGG" id="mae:Maeo_0727"/>
<dbReference type="eggNOG" id="arCOG00501">
    <property type="taxonomic scope" value="Archaea"/>
</dbReference>
<dbReference type="HOGENOM" id="CLU_031317_2_1_2"/>
<dbReference type="OrthoDB" id="85118at2157"/>
<dbReference type="Proteomes" id="UP000001106">
    <property type="component" value="Chromosome"/>
</dbReference>
<dbReference type="GO" id="GO:0042781">
    <property type="term" value="F:3'-tRNA processing endoribonuclease activity"/>
    <property type="evidence" value="ECO:0007669"/>
    <property type="project" value="UniProtKB-UniRule"/>
</dbReference>
<dbReference type="GO" id="GO:0008270">
    <property type="term" value="F:zinc ion binding"/>
    <property type="evidence" value="ECO:0007669"/>
    <property type="project" value="UniProtKB-UniRule"/>
</dbReference>
<dbReference type="CDD" id="cd07717">
    <property type="entry name" value="RNaseZ_ZiPD-like_MBL-fold"/>
    <property type="match status" value="1"/>
</dbReference>
<dbReference type="FunFam" id="3.60.15.10:FF:000002">
    <property type="entry name" value="Ribonuclease Z"/>
    <property type="match status" value="1"/>
</dbReference>
<dbReference type="Gene3D" id="3.60.15.10">
    <property type="entry name" value="Ribonuclease Z/Hydroxyacylglutathione hydrolase-like"/>
    <property type="match status" value="1"/>
</dbReference>
<dbReference type="HAMAP" id="MF_01818">
    <property type="entry name" value="RNase_Z_BN"/>
    <property type="match status" value="1"/>
</dbReference>
<dbReference type="InterPro" id="IPR001279">
    <property type="entry name" value="Metallo-B-lactamas"/>
</dbReference>
<dbReference type="InterPro" id="IPR036866">
    <property type="entry name" value="RibonucZ/Hydroxyglut_hydro"/>
</dbReference>
<dbReference type="InterPro" id="IPR013471">
    <property type="entry name" value="RNase_Z/BN"/>
</dbReference>
<dbReference type="NCBIfam" id="NF000801">
    <property type="entry name" value="PRK00055.1-3"/>
    <property type="match status" value="1"/>
</dbReference>
<dbReference type="NCBIfam" id="TIGR02651">
    <property type="entry name" value="RNase_Z"/>
    <property type="match status" value="1"/>
</dbReference>
<dbReference type="PANTHER" id="PTHR46018">
    <property type="entry name" value="ZINC PHOSPHODIESTERASE ELAC PROTEIN 1"/>
    <property type="match status" value="1"/>
</dbReference>
<dbReference type="PANTHER" id="PTHR46018:SF2">
    <property type="entry name" value="ZINC PHOSPHODIESTERASE ELAC PROTEIN 1"/>
    <property type="match status" value="1"/>
</dbReference>
<dbReference type="Pfam" id="PF00753">
    <property type="entry name" value="Lactamase_B"/>
    <property type="match status" value="1"/>
</dbReference>
<dbReference type="SMART" id="SM00849">
    <property type="entry name" value="Lactamase_B"/>
    <property type="match status" value="1"/>
</dbReference>
<dbReference type="SUPFAM" id="SSF56281">
    <property type="entry name" value="Metallo-hydrolase/oxidoreductase"/>
    <property type="match status" value="1"/>
</dbReference>
<accession>A6UUY8</accession>
<feature type="chain" id="PRO_1000070297" description="Ribonuclease Z">
    <location>
        <begin position="1"/>
        <end position="322"/>
    </location>
</feature>
<feature type="active site" description="Proton acceptor" evidence="1">
    <location>
        <position position="64"/>
    </location>
</feature>
<feature type="binding site" evidence="1">
    <location>
        <position position="60"/>
    </location>
    <ligand>
        <name>Zn(2+)</name>
        <dbReference type="ChEBI" id="CHEBI:29105"/>
        <label>1</label>
        <note>catalytic</note>
    </ligand>
</feature>
<feature type="binding site" evidence="1">
    <location>
        <position position="62"/>
    </location>
    <ligand>
        <name>Zn(2+)</name>
        <dbReference type="ChEBI" id="CHEBI:29105"/>
        <label>1</label>
        <note>catalytic</note>
    </ligand>
</feature>
<feature type="binding site" evidence="1">
    <location>
        <position position="64"/>
    </location>
    <ligand>
        <name>Zn(2+)</name>
        <dbReference type="ChEBI" id="CHEBI:29105"/>
        <label>2</label>
        <note>catalytic</note>
    </ligand>
</feature>
<feature type="binding site" evidence="1">
    <location>
        <position position="65"/>
    </location>
    <ligand>
        <name>Zn(2+)</name>
        <dbReference type="ChEBI" id="CHEBI:29105"/>
        <label>2</label>
        <note>catalytic</note>
    </ligand>
</feature>
<feature type="binding site" evidence="1">
    <location>
        <position position="140"/>
    </location>
    <ligand>
        <name>Zn(2+)</name>
        <dbReference type="ChEBI" id="CHEBI:29105"/>
        <label>1</label>
        <note>catalytic</note>
    </ligand>
</feature>
<feature type="binding site" evidence="1">
    <location>
        <position position="210"/>
    </location>
    <ligand>
        <name>Zn(2+)</name>
        <dbReference type="ChEBI" id="CHEBI:29105"/>
        <label>1</label>
        <note>catalytic</note>
    </ligand>
</feature>
<feature type="binding site" evidence="1">
    <location>
        <position position="210"/>
    </location>
    <ligand>
        <name>Zn(2+)</name>
        <dbReference type="ChEBI" id="CHEBI:29105"/>
        <label>2</label>
        <note>catalytic</note>
    </ligand>
</feature>
<feature type="binding site" evidence="1">
    <location>
        <position position="270"/>
    </location>
    <ligand>
        <name>Zn(2+)</name>
        <dbReference type="ChEBI" id="CHEBI:29105"/>
        <label>2</label>
        <note>catalytic</note>
    </ligand>
</feature>
<reference key="1">
    <citation type="submission" date="2007-06" db="EMBL/GenBank/DDBJ databases">
        <title>Complete sequence of Methanococcus aeolicus Nankai-3.</title>
        <authorList>
            <consortium name="US DOE Joint Genome Institute"/>
            <person name="Copeland A."/>
            <person name="Lucas S."/>
            <person name="Lapidus A."/>
            <person name="Barry K."/>
            <person name="Glavina del Rio T."/>
            <person name="Dalin E."/>
            <person name="Tice H."/>
            <person name="Pitluck S."/>
            <person name="Chain P."/>
            <person name="Malfatti S."/>
            <person name="Shin M."/>
            <person name="Vergez L."/>
            <person name="Schmutz J."/>
            <person name="Larimer F."/>
            <person name="Land M."/>
            <person name="Hauser L."/>
            <person name="Kyrpides N."/>
            <person name="Lykidis A."/>
            <person name="Sieprawska-Lupa M."/>
            <person name="Whitman W.B."/>
            <person name="Richardson P."/>
        </authorList>
    </citation>
    <scope>NUCLEOTIDE SEQUENCE [LARGE SCALE GENOMIC DNA]</scope>
    <source>
        <strain>ATCC BAA-1280 / DSM 17508 / OCM 812 / Nankai-3</strain>
    </source>
</reference>
<protein>
    <recommendedName>
        <fullName evidence="1">Ribonuclease Z</fullName>
        <shortName evidence="1">RNase Z</shortName>
        <ecNumber evidence="1">3.1.26.11</ecNumber>
    </recommendedName>
    <alternativeName>
        <fullName evidence="1">tRNA 3 endonuclease</fullName>
    </alternativeName>
    <alternativeName>
        <fullName evidence="1">tRNase Z</fullName>
    </alternativeName>
</protein>
<name>RNZ_META3</name>
<gene>
    <name evidence="1" type="primary">rnz</name>
    <name type="ordered locus">Maeo_0727</name>
</gene>
<organism>
    <name type="scientific">Methanococcus aeolicus (strain ATCC BAA-1280 / DSM 17508 / OCM 812 / Nankai-3)</name>
    <dbReference type="NCBI Taxonomy" id="419665"/>
    <lineage>
        <taxon>Archaea</taxon>
        <taxon>Methanobacteriati</taxon>
        <taxon>Methanobacteriota</taxon>
        <taxon>Methanomada group</taxon>
        <taxon>Methanococci</taxon>
        <taxon>Methanococcales</taxon>
        <taxon>Methanococcaceae</taxon>
        <taxon>Methanococcus</taxon>
    </lineage>
</organism>
<keyword id="KW-0255">Endonuclease</keyword>
<keyword id="KW-0378">Hydrolase</keyword>
<keyword id="KW-0479">Metal-binding</keyword>
<keyword id="KW-0540">Nuclease</keyword>
<keyword id="KW-0819">tRNA processing</keyword>
<keyword id="KW-0862">Zinc</keyword>
<evidence type="ECO:0000255" key="1">
    <source>
        <dbReference type="HAMAP-Rule" id="MF_01818"/>
    </source>
</evidence>